<accession>A7EXE6</accession>
<gene>
    <name type="primary">atg22-2</name>
    <name type="ORF">SS1G_10007</name>
</gene>
<name>AT222_SCLS1</name>
<evidence type="ECO:0000250" key="1"/>
<evidence type="ECO:0000255" key="2"/>
<evidence type="ECO:0000256" key="3">
    <source>
        <dbReference type="SAM" id="MobiDB-lite"/>
    </source>
</evidence>
<evidence type="ECO:0000305" key="4"/>
<dbReference type="EMBL" id="CH476634">
    <property type="protein sequence ID" value="EDN94138.1"/>
    <property type="molecule type" value="Genomic_DNA"/>
</dbReference>
<dbReference type="RefSeq" id="XP_001589372.1">
    <property type="nucleotide sequence ID" value="XM_001589322.1"/>
</dbReference>
<dbReference type="FunCoup" id="A7EXE6">
    <property type="interactions" value="22"/>
</dbReference>
<dbReference type="STRING" id="665079.A7EXE6"/>
<dbReference type="GlyCosmos" id="A7EXE6">
    <property type="glycosylation" value="3 sites, No reported glycans"/>
</dbReference>
<dbReference type="GeneID" id="5485226"/>
<dbReference type="KEGG" id="ssl:SS1G_10007"/>
<dbReference type="VEuPathDB" id="FungiDB:sscle_01g003180"/>
<dbReference type="InParanoid" id="A7EXE6"/>
<dbReference type="OMA" id="QQQWEMY"/>
<dbReference type="OrthoDB" id="192733at2759"/>
<dbReference type="Proteomes" id="UP000001312">
    <property type="component" value="Unassembled WGS sequence"/>
</dbReference>
<dbReference type="GO" id="GO:0005774">
    <property type="term" value="C:vacuolar membrane"/>
    <property type="evidence" value="ECO:0007669"/>
    <property type="project" value="UniProtKB-SubCell"/>
</dbReference>
<dbReference type="GO" id="GO:0032974">
    <property type="term" value="P:amino acid transmembrane export from vacuole"/>
    <property type="evidence" value="ECO:0000318"/>
    <property type="project" value="GO_Central"/>
</dbReference>
<dbReference type="GO" id="GO:0006914">
    <property type="term" value="P:autophagy"/>
    <property type="evidence" value="ECO:0007669"/>
    <property type="project" value="UniProtKB-KW"/>
</dbReference>
<dbReference type="CDD" id="cd17483">
    <property type="entry name" value="MFS_Atg22_like"/>
    <property type="match status" value="1"/>
</dbReference>
<dbReference type="FunFam" id="1.20.1250.20:FF:000645">
    <property type="entry name" value="Autophagy-related protein"/>
    <property type="match status" value="1"/>
</dbReference>
<dbReference type="Gene3D" id="1.20.1250.20">
    <property type="entry name" value="MFS general substrate transporter like domains"/>
    <property type="match status" value="1"/>
</dbReference>
<dbReference type="InterPro" id="IPR044738">
    <property type="entry name" value="Atg22"/>
</dbReference>
<dbReference type="InterPro" id="IPR024671">
    <property type="entry name" value="Atg22-like"/>
</dbReference>
<dbReference type="InterPro" id="IPR050495">
    <property type="entry name" value="ATG22/LtaA_families"/>
</dbReference>
<dbReference type="InterPro" id="IPR036259">
    <property type="entry name" value="MFS_trans_sf"/>
</dbReference>
<dbReference type="PANTHER" id="PTHR23519">
    <property type="entry name" value="AUTOPHAGY-RELATED PROTEIN 22"/>
    <property type="match status" value="1"/>
</dbReference>
<dbReference type="PANTHER" id="PTHR23519:SF1">
    <property type="entry name" value="AUTOPHAGY-RELATED PROTEIN 22"/>
    <property type="match status" value="1"/>
</dbReference>
<dbReference type="Pfam" id="PF11700">
    <property type="entry name" value="ATG22"/>
    <property type="match status" value="1"/>
</dbReference>
<dbReference type="SUPFAM" id="SSF103473">
    <property type="entry name" value="MFS general substrate transporter"/>
    <property type="match status" value="1"/>
</dbReference>
<organism>
    <name type="scientific">Sclerotinia sclerotiorum (strain ATCC 18683 / 1980 / Ss-1)</name>
    <name type="common">White mold</name>
    <name type="synonym">Whetzelinia sclerotiorum</name>
    <dbReference type="NCBI Taxonomy" id="665079"/>
    <lineage>
        <taxon>Eukaryota</taxon>
        <taxon>Fungi</taxon>
        <taxon>Dikarya</taxon>
        <taxon>Ascomycota</taxon>
        <taxon>Pezizomycotina</taxon>
        <taxon>Leotiomycetes</taxon>
        <taxon>Helotiales</taxon>
        <taxon>Sclerotiniaceae</taxon>
        <taxon>Sclerotinia</taxon>
    </lineage>
</organism>
<reference key="1">
    <citation type="journal article" date="2011" name="PLoS Genet.">
        <title>Genomic analysis of the necrotrophic fungal pathogens Sclerotinia sclerotiorum and Botrytis cinerea.</title>
        <authorList>
            <person name="Amselem J."/>
            <person name="Cuomo C.A."/>
            <person name="van Kan J.A.L."/>
            <person name="Viaud M."/>
            <person name="Benito E.P."/>
            <person name="Couloux A."/>
            <person name="Coutinho P.M."/>
            <person name="de Vries R.P."/>
            <person name="Dyer P.S."/>
            <person name="Fillinger S."/>
            <person name="Fournier E."/>
            <person name="Gout L."/>
            <person name="Hahn M."/>
            <person name="Kohn L."/>
            <person name="Lapalu N."/>
            <person name="Plummer K.M."/>
            <person name="Pradier J.-M."/>
            <person name="Quevillon E."/>
            <person name="Sharon A."/>
            <person name="Simon A."/>
            <person name="ten Have A."/>
            <person name="Tudzynski B."/>
            <person name="Tudzynski P."/>
            <person name="Wincker P."/>
            <person name="Andrew M."/>
            <person name="Anthouard V."/>
            <person name="Beever R.E."/>
            <person name="Beffa R."/>
            <person name="Benoit I."/>
            <person name="Bouzid O."/>
            <person name="Brault B."/>
            <person name="Chen Z."/>
            <person name="Choquer M."/>
            <person name="Collemare J."/>
            <person name="Cotton P."/>
            <person name="Danchin E.G."/>
            <person name="Da Silva C."/>
            <person name="Gautier A."/>
            <person name="Giraud C."/>
            <person name="Giraud T."/>
            <person name="Gonzalez C."/>
            <person name="Grossetete S."/>
            <person name="Gueldener U."/>
            <person name="Henrissat B."/>
            <person name="Howlett B.J."/>
            <person name="Kodira C."/>
            <person name="Kretschmer M."/>
            <person name="Lappartient A."/>
            <person name="Leroch M."/>
            <person name="Levis C."/>
            <person name="Mauceli E."/>
            <person name="Neuveglise C."/>
            <person name="Oeser B."/>
            <person name="Pearson M."/>
            <person name="Poulain J."/>
            <person name="Poussereau N."/>
            <person name="Quesneville H."/>
            <person name="Rascle C."/>
            <person name="Schumacher J."/>
            <person name="Segurens B."/>
            <person name="Sexton A."/>
            <person name="Silva E."/>
            <person name="Sirven C."/>
            <person name="Soanes D.M."/>
            <person name="Talbot N.J."/>
            <person name="Templeton M."/>
            <person name="Yandava C."/>
            <person name="Yarden O."/>
            <person name="Zeng Q."/>
            <person name="Rollins J.A."/>
            <person name="Lebrun M.-H."/>
            <person name="Dickman M."/>
        </authorList>
    </citation>
    <scope>NUCLEOTIDE SEQUENCE [LARGE SCALE GENOMIC DNA]</scope>
    <source>
        <strain>ATCC 18683 / 1980 / Ss-1</strain>
    </source>
</reference>
<keyword id="KW-0029">Amino-acid transport</keyword>
<keyword id="KW-0072">Autophagy</keyword>
<keyword id="KW-0325">Glycoprotein</keyword>
<keyword id="KW-0472">Membrane</keyword>
<keyword id="KW-1185">Reference proteome</keyword>
<keyword id="KW-0812">Transmembrane</keyword>
<keyword id="KW-1133">Transmembrane helix</keyword>
<keyword id="KW-0813">Transport</keyword>
<keyword id="KW-0926">Vacuole</keyword>
<comment type="function">
    <text evidence="1">Vacuolar effluxer which mediate the efflux of amino acids resulting from autophagic degradation. The release of autophagic amino acids allows the maintenance of protein synthesis and viability during nitrogen starvation (By similarity).</text>
</comment>
<comment type="subcellular location">
    <subcellularLocation>
        <location evidence="1">Vacuole membrane</location>
        <topology evidence="1">Multi-pass membrane protein</topology>
    </subcellularLocation>
    <text evidence="1">Vacuole and punctate structures.</text>
</comment>
<comment type="similarity">
    <text evidence="4">Belongs to the ATG22 family.</text>
</comment>
<sequence length="671" mass="73057">MVPRNFSESQLRPEPERAPSNSTKISYRSHSSSFEADDERSSSADHDSMGPDIGSAHRDVPAQYAGEDTRLTSRKELSGWYAYGFAAEVFVICGIGSFIPITLEQLARENGVLLSDPTQPCGSSSTHLPPGLHPGSAKDSQCVIYLGGLQINTASFAMYSFSLSVLFQAILVVSISCAADHGNYRKRLLLFFAFAGSITTMLFLTVVPKVYLLGALWAIISNTCFGASFVLLNSFLPLLVRHHPKAQYGTPDFSPEFRPSSVDESPPEHSLNEPEVAVYDERSALLAHNRISSQASDVAEPFPLSKDSTSIELQLSTQISSTGIGIGYSAGLFLQCVSIVIIWLLNGTTFSLRLVLFFIGLWWFLFTIPAALWLRPRPGPPLPHTGGENSKGSRSWLAYTIYAWSSLFRTVKLARRLKDITFFLAAWFLLSDAIATVSGTAVLYAKTQLRMAPEALGLINVIATTAGVLGAFSWAAISRTLNLKPHQTILACICIFEMIPLYGLLGFLPIVKRWNVVGLQQPWEMYPLGFVYGFVLGGLSSYCRSLFGELIPPGSEAAFYALYAITDKGSSVFGPAIVGAIVDRTGEIRPAFWFLAVLVGLPAPLIYFVNVERGKKEGAKLAEIIEGFKIKDAESAGEGSRGSSIDHESGQNEGLIYPRVGENAGRGRNDI</sequence>
<feature type="chain" id="PRO_0000318034" description="Autophagy-related protein 22-2">
    <location>
        <begin position="1"/>
        <end position="671"/>
    </location>
</feature>
<feature type="transmembrane region" description="Helical" evidence="2">
    <location>
        <begin position="83"/>
        <end position="103"/>
    </location>
</feature>
<feature type="transmembrane region" description="Helical" evidence="2">
    <location>
        <begin position="155"/>
        <end position="175"/>
    </location>
</feature>
<feature type="transmembrane region" description="Helical" evidence="2">
    <location>
        <begin position="188"/>
        <end position="208"/>
    </location>
</feature>
<feature type="transmembrane region" description="Helical" evidence="2">
    <location>
        <begin position="212"/>
        <end position="232"/>
    </location>
</feature>
<feature type="transmembrane region" description="Helical" evidence="2">
    <location>
        <begin position="324"/>
        <end position="344"/>
    </location>
</feature>
<feature type="transmembrane region" description="Helical" evidence="2">
    <location>
        <begin position="354"/>
        <end position="374"/>
    </location>
</feature>
<feature type="transmembrane region" description="Helical" evidence="2">
    <location>
        <begin position="422"/>
        <end position="442"/>
    </location>
</feature>
<feature type="transmembrane region" description="Helical" evidence="2">
    <location>
        <begin position="457"/>
        <end position="477"/>
    </location>
</feature>
<feature type="transmembrane region" description="Helical" evidence="2">
    <location>
        <begin position="491"/>
        <end position="511"/>
    </location>
</feature>
<feature type="transmembrane region" description="Helical" evidence="2">
    <location>
        <begin position="523"/>
        <end position="543"/>
    </location>
</feature>
<feature type="transmembrane region" description="Helical" evidence="2">
    <location>
        <begin position="560"/>
        <end position="582"/>
    </location>
</feature>
<feature type="transmembrane region" description="Helical" evidence="2">
    <location>
        <begin position="591"/>
        <end position="611"/>
    </location>
</feature>
<feature type="region of interest" description="Disordered" evidence="3">
    <location>
        <begin position="1"/>
        <end position="67"/>
    </location>
</feature>
<feature type="region of interest" description="Disordered" evidence="3">
    <location>
        <begin position="251"/>
        <end position="271"/>
    </location>
</feature>
<feature type="region of interest" description="Disordered" evidence="3">
    <location>
        <begin position="634"/>
        <end position="671"/>
    </location>
</feature>
<feature type="compositionally biased region" description="Polar residues" evidence="3">
    <location>
        <begin position="1"/>
        <end position="10"/>
    </location>
</feature>
<feature type="compositionally biased region" description="Polar residues" evidence="3">
    <location>
        <begin position="19"/>
        <end position="34"/>
    </location>
</feature>
<feature type="compositionally biased region" description="Basic and acidic residues" evidence="3">
    <location>
        <begin position="39"/>
        <end position="60"/>
    </location>
</feature>
<feature type="glycosylation site" description="N-linked (GlcNAc...) asparagine" evidence="2">
    <location>
        <position position="5"/>
    </location>
</feature>
<feature type="glycosylation site" description="N-linked (GlcNAc...) asparagine" evidence="2">
    <location>
        <position position="21"/>
    </location>
</feature>
<feature type="glycosylation site" description="N-linked (GlcNAc...) asparagine" evidence="2">
    <location>
        <position position="346"/>
    </location>
</feature>
<proteinExistence type="inferred from homology"/>
<protein>
    <recommendedName>
        <fullName>Autophagy-related protein 22-2</fullName>
    </recommendedName>
</protein>